<reference key="1">
    <citation type="journal article" date="1997" name="DNA Res.">
        <title>Characterization of cDNA clones in size-fractionated cDNA libraries from human brain.</title>
        <authorList>
            <person name="Seki N."/>
            <person name="Ohira M."/>
            <person name="Nagase T."/>
            <person name="Ishikawa K."/>
            <person name="Miyajima N."/>
            <person name="Nakajima D."/>
            <person name="Nomura N."/>
            <person name="Ohara O."/>
        </authorList>
    </citation>
    <scope>NUCLEOTIDE SEQUENCE [LARGE SCALE MRNA]</scope>
    <source>
        <tissue>Brain</tissue>
    </source>
</reference>
<reference key="2">
    <citation type="journal article" date="2004" name="Nat. Genet.">
        <title>Complete sequencing and characterization of 21,243 full-length human cDNAs.</title>
        <authorList>
            <person name="Ota T."/>
            <person name="Suzuki Y."/>
            <person name="Nishikawa T."/>
            <person name="Otsuki T."/>
            <person name="Sugiyama T."/>
            <person name="Irie R."/>
            <person name="Wakamatsu A."/>
            <person name="Hayashi K."/>
            <person name="Sato H."/>
            <person name="Nagai K."/>
            <person name="Kimura K."/>
            <person name="Makita H."/>
            <person name="Sekine M."/>
            <person name="Obayashi M."/>
            <person name="Nishi T."/>
            <person name="Shibahara T."/>
            <person name="Tanaka T."/>
            <person name="Ishii S."/>
            <person name="Yamamoto J."/>
            <person name="Saito K."/>
            <person name="Kawai Y."/>
            <person name="Isono Y."/>
            <person name="Nakamura Y."/>
            <person name="Nagahari K."/>
            <person name="Murakami K."/>
            <person name="Yasuda T."/>
            <person name="Iwayanagi T."/>
            <person name="Wagatsuma M."/>
            <person name="Shiratori A."/>
            <person name="Sudo H."/>
            <person name="Hosoiri T."/>
            <person name="Kaku Y."/>
            <person name="Kodaira H."/>
            <person name="Kondo H."/>
            <person name="Sugawara M."/>
            <person name="Takahashi M."/>
            <person name="Kanda K."/>
            <person name="Yokoi T."/>
            <person name="Furuya T."/>
            <person name="Kikkawa E."/>
            <person name="Omura Y."/>
            <person name="Abe K."/>
            <person name="Kamihara K."/>
            <person name="Katsuta N."/>
            <person name="Sato K."/>
            <person name="Tanikawa M."/>
            <person name="Yamazaki M."/>
            <person name="Ninomiya K."/>
            <person name="Ishibashi T."/>
            <person name="Yamashita H."/>
            <person name="Murakawa K."/>
            <person name="Fujimori K."/>
            <person name="Tanai H."/>
            <person name="Kimata M."/>
            <person name="Watanabe M."/>
            <person name="Hiraoka S."/>
            <person name="Chiba Y."/>
            <person name="Ishida S."/>
            <person name="Ono Y."/>
            <person name="Takiguchi S."/>
            <person name="Watanabe S."/>
            <person name="Yosida M."/>
            <person name="Hotuta T."/>
            <person name="Kusano J."/>
            <person name="Kanehori K."/>
            <person name="Takahashi-Fujii A."/>
            <person name="Hara H."/>
            <person name="Tanase T.-O."/>
            <person name="Nomura Y."/>
            <person name="Togiya S."/>
            <person name="Komai F."/>
            <person name="Hara R."/>
            <person name="Takeuchi K."/>
            <person name="Arita M."/>
            <person name="Imose N."/>
            <person name="Musashino K."/>
            <person name="Yuuki H."/>
            <person name="Oshima A."/>
            <person name="Sasaki N."/>
            <person name="Aotsuka S."/>
            <person name="Yoshikawa Y."/>
            <person name="Matsunawa H."/>
            <person name="Ichihara T."/>
            <person name="Shiohata N."/>
            <person name="Sano S."/>
            <person name="Moriya S."/>
            <person name="Momiyama H."/>
            <person name="Satoh N."/>
            <person name="Takami S."/>
            <person name="Terashima Y."/>
            <person name="Suzuki O."/>
            <person name="Nakagawa S."/>
            <person name="Senoh A."/>
            <person name="Mizoguchi H."/>
            <person name="Goto Y."/>
            <person name="Shimizu F."/>
            <person name="Wakebe H."/>
            <person name="Hishigaki H."/>
            <person name="Watanabe T."/>
            <person name="Sugiyama A."/>
            <person name="Takemoto M."/>
            <person name="Kawakami B."/>
            <person name="Yamazaki M."/>
            <person name="Watanabe K."/>
            <person name="Kumagai A."/>
            <person name="Itakura S."/>
            <person name="Fukuzumi Y."/>
            <person name="Fujimori Y."/>
            <person name="Komiyama M."/>
            <person name="Tashiro H."/>
            <person name="Tanigami A."/>
            <person name="Fujiwara T."/>
            <person name="Ono T."/>
            <person name="Yamada K."/>
            <person name="Fujii Y."/>
            <person name="Ozaki K."/>
            <person name="Hirao M."/>
            <person name="Ohmori Y."/>
            <person name="Kawabata A."/>
            <person name="Hikiji T."/>
            <person name="Kobatake N."/>
            <person name="Inagaki H."/>
            <person name="Ikema Y."/>
            <person name="Okamoto S."/>
            <person name="Okitani R."/>
            <person name="Kawakami T."/>
            <person name="Noguchi S."/>
            <person name="Itoh T."/>
            <person name="Shigeta K."/>
            <person name="Senba T."/>
            <person name="Matsumura K."/>
            <person name="Nakajima Y."/>
            <person name="Mizuno T."/>
            <person name="Morinaga M."/>
            <person name="Sasaki M."/>
            <person name="Togashi T."/>
            <person name="Oyama M."/>
            <person name="Hata H."/>
            <person name="Watanabe M."/>
            <person name="Komatsu T."/>
            <person name="Mizushima-Sugano J."/>
            <person name="Satoh T."/>
            <person name="Shirai Y."/>
            <person name="Takahashi Y."/>
            <person name="Nakagawa K."/>
            <person name="Okumura K."/>
            <person name="Nagase T."/>
            <person name="Nomura N."/>
            <person name="Kikuchi H."/>
            <person name="Masuho Y."/>
            <person name="Yamashita R."/>
            <person name="Nakai K."/>
            <person name="Yada T."/>
            <person name="Nakamura Y."/>
            <person name="Ohara O."/>
            <person name="Isogai T."/>
            <person name="Sugano S."/>
        </authorList>
    </citation>
    <scope>NUCLEOTIDE SEQUENCE [LARGE SCALE MRNA]</scope>
    <source>
        <tissue>Spleen</tissue>
    </source>
</reference>
<reference key="3">
    <citation type="journal article" date="2007" name="BMC Genomics">
        <title>The full-ORF clone resource of the German cDNA consortium.</title>
        <authorList>
            <person name="Bechtel S."/>
            <person name="Rosenfelder H."/>
            <person name="Duda A."/>
            <person name="Schmidt C.P."/>
            <person name="Ernst U."/>
            <person name="Wellenreuther R."/>
            <person name="Mehrle A."/>
            <person name="Schuster C."/>
            <person name="Bahr A."/>
            <person name="Bloecker H."/>
            <person name="Heubner D."/>
            <person name="Hoerlein A."/>
            <person name="Michel G."/>
            <person name="Wedler H."/>
            <person name="Koehrer K."/>
            <person name="Ottenwaelder B."/>
            <person name="Poustka A."/>
            <person name="Wiemann S."/>
            <person name="Schupp I."/>
        </authorList>
    </citation>
    <scope>NUCLEOTIDE SEQUENCE [LARGE SCALE MRNA]</scope>
    <source>
        <tissue>Endometrium</tissue>
    </source>
</reference>
<reference key="4">
    <citation type="journal article" date="2006" name="Nature">
        <title>The DNA sequence and biological annotation of human chromosome 1.</title>
        <authorList>
            <person name="Gregory S.G."/>
            <person name="Barlow K.F."/>
            <person name="McLay K.E."/>
            <person name="Kaul R."/>
            <person name="Swarbreck D."/>
            <person name="Dunham A."/>
            <person name="Scott C.E."/>
            <person name="Howe K.L."/>
            <person name="Woodfine K."/>
            <person name="Spencer C.C.A."/>
            <person name="Jones M.C."/>
            <person name="Gillson C."/>
            <person name="Searle S."/>
            <person name="Zhou Y."/>
            <person name="Kokocinski F."/>
            <person name="McDonald L."/>
            <person name="Evans R."/>
            <person name="Phillips K."/>
            <person name="Atkinson A."/>
            <person name="Cooper R."/>
            <person name="Jones C."/>
            <person name="Hall R.E."/>
            <person name="Andrews T.D."/>
            <person name="Lloyd C."/>
            <person name="Ainscough R."/>
            <person name="Almeida J.P."/>
            <person name="Ambrose K.D."/>
            <person name="Anderson F."/>
            <person name="Andrew R.W."/>
            <person name="Ashwell R.I.S."/>
            <person name="Aubin K."/>
            <person name="Babbage A.K."/>
            <person name="Bagguley C.L."/>
            <person name="Bailey J."/>
            <person name="Beasley H."/>
            <person name="Bethel G."/>
            <person name="Bird C.P."/>
            <person name="Bray-Allen S."/>
            <person name="Brown J.Y."/>
            <person name="Brown A.J."/>
            <person name="Buckley D."/>
            <person name="Burton J."/>
            <person name="Bye J."/>
            <person name="Carder C."/>
            <person name="Chapman J.C."/>
            <person name="Clark S.Y."/>
            <person name="Clarke G."/>
            <person name="Clee C."/>
            <person name="Cobley V."/>
            <person name="Collier R.E."/>
            <person name="Corby N."/>
            <person name="Coville G.J."/>
            <person name="Davies J."/>
            <person name="Deadman R."/>
            <person name="Dunn M."/>
            <person name="Earthrowl M."/>
            <person name="Ellington A.G."/>
            <person name="Errington H."/>
            <person name="Frankish A."/>
            <person name="Frankland J."/>
            <person name="French L."/>
            <person name="Garner P."/>
            <person name="Garnett J."/>
            <person name="Gay L."/>
            <person name="Ghori M.R.J."/>
            <person name="Gibson R."/>
            <person name="Gilby L.M."/>
            <person name="Gillett W."/>
            <person name="Glithero R.J."/>
            <person name="Grafham D.V."/>
            <person name="Griffiths C."/>
            <person name="Griffiths-Jones S."/>
            <person name="Grocock R."/>
            <person name="Hammond S."/>
            <person name="Harrison E.S.I."/>
            <person name="Hart E."/>
            <person name="Haugen E."/>
            <person name="Heath P.D."/>
            <person name="Holmes S."/>
            <person name="Holt K."/>
            <person name="Howden P.J."/>
            <person name="Hunt A.R."/>
            <person name="Hunt S.E."/>
            <person name="Hunter G."/>
            <person name="Isherwood J."/>
            <person name="James R."/>
            <person name="Johnson C."/>
            <person name="Johnson D."/>
            <person name="Joy A."/>
            <person name="Kay M."/>
            <person name="Kershaw J.K."/>
            <person name="Kibukawa M."/>
            <person name="Kimberley A.M."/>
            <person name="King A."/>
            <person name="Knights A.J."/>
            <person name="Lad H."/>
            <person name="Laird G."/>
            <person name="Lawlor S."/>
            <person name="Leongamornlert D.A."/>
            <person name="Lloyd D.M."/>
            <person name="Loveland J."/>
            <person name="Lovell J."/>
            <person name="Lush M.J."/>
            <person name="Lyne R."/>
            <person name="Martin S."/>
            <person name="Mashreghi-Mohammadi M."/>
            <person name="Matthews L."/>
            <person name="Matthews N.S.W."/>
            <person name="McLaren S."/>
            <person name="Milne S."/>
            <person name="Mistry S."/>
            <person name="Moore M.J.F."/>
            <person name="Nickerson T."/>
            <person name="O'Dell C.N."/>
            <person name="Oliver K."/>
            <person name="Palmeiri A."/>
            <person name="Palmer S.A."/>
            <person name="Parker A."/>
            <person name="Patel D."/>
            <person name="Pearce A.V."/>
            <person name="Peck A.I."/>
            <person name="Pelan S."/>
            <person name="Phelps K."/>
            <person name="Phillimore B.J."/>
            <person name="Plumb R."/>
            <person name="Rajan J."/>
            <person name="Raymond C."/>
            <person name="Rouse G."/>
            <person name="Saenphimmachak C."/>
            <person name="Sehra H.K."/>
            <person name="Sheridan E."/>
            <person name="Shownkeen R."/>
            <person name="Sims S."/>
            <person name="Skuce C.D."/>
            <person name="Smith M."/>
            <person name="Steward C."/>
            <person name="Subramanian S."/>
            <person name="Sycamore N."/>
            <person name="Tracey A."/>
            <person name="Tromans A."/>
            <person name="Van Helmond Z."/>
            <person name="Wall M."/>
            <person name="Wallis J.M."/>
            <person name="White S."/>
            <person name="Whitehead S.L."/>
            <person name="Wilkinson J.E."/>
            <person name="Willey D.L."/>
            <person name="Williams H."/>
            <person name="Wilming L."/>
            <person name="Wray P.W."/>
            <person name="Wu Z."/>
            <person name="Coulson A."/>
            <person name="Vaudin M."/>
            <person name="Sulston J.E."/>
            <person name="Durbin R.M."/>
            <person name="Hubbard T."/>
            <person name="Wooster R."/>
            <person name="Dunham I."/>
            <person name="Carter N.P."/>
            <person name="McVean G."/>
            <person name="Ross M.T."/>
            <person name="Harrow J."/>
            <person name="Olson M.V."/>
            <person name="Beck S."/>
            <person name="Rogers J."/>
            <person name="Bentley D.R."/>
        </authorList>
    </citation>
    <scope>NUCLEOTIDE SEQUENCE [LARGE SCALE GENOMIC DNA]</scope>
</reference>
<reference key="5">
    <citation type="submission" date="2006-12" db="EMBL/GenBank/DDBJ databases">
        <authorList>
            <person name="Mural R.J."/>
            <person name="Istrail S."/>
            <person name="Sutton G.G."/>
            <person name="Florea L."/>
            <person name="Halpern A.L."/>
            <person name="Mobarry C.M."/>
            <person name="Lippert R."/>
            <person name="Walenz B."/>
            <person name="Shatkay H."/>
            <person name="Dew I."/>
            <person name="Miller J.R."/>
            <person name="Flanigan M.J."/>
            <person name="Edwards N.J."/>
            <person name="Bolanos R."/>
            <person name="Fasulo D."/>
            <person name="Halldorsson B.V."/>
            <person name="Hannenhalli S."/>
            <person name="Turner R."/>
            <person name="Yooseph S."/>
            <person name="Lu F."/>
            <person name="Nusskern D.R."/>
            <person name="Shue B.C."/>
            <person name="Zheng X.H."/>
            <person name="Zhong F."/>
            <person name="Delcher A.L."/>
            <person name="Huson D.H."/>
            <person name="Kravitz S.A."/>
            <person name="Mouchard L."/>
            <person name="Reinert K."/>
            <person name="Remington K.A."/>
            <person name="Clark A.G."/>
            <person name="Waterman M.S."/>
            <person name="Eichler E.E."/>
            <person name="Adams M.D."/>
            <person name="Hunkapiller M.W."/>
            <person name="Myers E.W."/>
            <person name="Venter J.C."/>
        </authorList>
    </citation>
    <scope>NUCLEOTIDE SEQUENCE [LARGE SCALE GENOMIC DNA]</scope>
</reference>
<reference key="6">
    <citation type="journal article" date="2004" name="Genome Res.">
        <title>The status, quality, and expansion of the NIH full-length cDNA project: the Mammalian Gene Collection (MGC).</title>
        <authorList>
            <consortium name="The MGC Project Team"/>
        </authorList>
    </citation>
    <scope>NUCLEOTIDE SEQUENCE [LARGE SCALE MRNA]</scope>
    <source>
        <tissue>Mammary gland</tissue>
    </source>
</reference>
<feature type="chain" id="PRO_0000305057" description="Solute carrier family 35 member E2B">
    <location>
        <begin position="1"/>
        <end position="405"/>
    </location>
</feature>
<feature type="transmembrane region" description="Helical" evidence="2">
    <location>
        <begin position="81"/>
        <end position="101"/>
    </location>
</feature>
<feature type="transmembrane region" description="Helical" evidence="2">
    <location>
        <begin position="106"/>
        <end position="126"/>
    </location>
</feature>
<feature type="transmembrane region" description="Helical" evidence="2">
    <location>
        <begin position="142"/>
        <end position="162"/>
    </location>
</feature>
<feature type="transmembrane region" description="Helical" evidence="2">
    <location>
        <begin position="167"/>
        <end position="187"/>
    </location>
</feature>
<feature type="transmembrane region" description="Helical" evidence="2">
    <location>
        <begin position="195"/>
        <end position="215"/>
    </location>
</feature>
<feature type="transmembrane region" description="Helical" evidence="2">
    <location>
        <begin position="219"/>
        <end position="241"/>
    </location>
</feature>
<feature type="transmembrane region" description="Helical" evidence="2">
    <location>
        <begin position="264"/>
        <end position="284"/>
    </location>
</feature>
<feature type="transmembrane region" description="Helical" evidence="2">
    <location>
        <begin position="296"/>
        <end position="316"/>
    </location>
</feature>
<feature type="transmembrane region" description="Helical" evidence="2">
    <location>
        <begin position="326"/>
        <end position="346"/>
    </location>
</feature>
<feature type="transmembrane region" description="Helical" evidence="2">
    <location>
        <begin position="347"/>
        <end position="367"/>
    </location>
</feature>
<feature type="region of interest" description="Disordered" evidence="3">
    <location>
        <begin position="1"/>
        <end position="28"/>
    </location>
</feature>
<feature type="region of interest" description="Disordered" evidence="3">
    <location>
        <begin position="380"/>
        <end position="405"/>
    </location>
</feature>
<feature type="sequence conflict" description="In Ref. 1; BAA32292, 3; BAG54222 and 4; CAI56761." evidence="4" ref="1 3 4">
    <original>V</original>
    <variation>I</variation>
    <location>
        <position position="312"/>
    </location>
</feature>
<feature type="sequence conflict" description="In Ref. 3; BAG54222." evidence="4" ref="3">
    <original>Q</original>
    <variation>R</variation>
    <location>
        <position position="399"/>
    </location>
</feature>
<protein>
    <recommendedName>
        <fullName>Solute carrier family 35 member E2B</fullName>
    </recommendedName>
</protein>
<name>S352B_HUMAN</name>
<gene>
    <name type="primary">SLC35E2B</name>
    <name type="synonym">KIAA0447</name>
</gene>
<proteinExistence type="evidence at protein level"/>
<comment type="function">
    <text evidence="1">Putative transporter.</text>
</comment>
<comment type="subcellular location">
    <subcellularLocation>
        <location evidence="4">Membrane</location>
        <topology evidence="4">Multi-pass membrane protein</topology>
    </subcellularLocation>
</comment>
<comment type="similarity">
    <text evidence="4">Belongs to the TPT transporter family. SLC35E subfamily.</text>
</comment>
<comment type="sequence caution" evidence="4">
    <conflict type="erroneous initiation">
        <sequence resource="EMBL-CDS" id="BAA32292"/>
    </conflict>
    <text>Extended N-terminus.</text>
</comment>
<organism>
    <name type="scientific">Homo sapiens</name>
    <name type="common">Human</name>
    <dbReference type="NCBI Taxonomy" id="9606"/>
    <lineage>
        <taxon>Eukaryota</taxon>
        <taxon>Metazoa</taxon>
        <taxon>Chordata</taxon>
        <taxon>Craniata</taxon>
        <taxon>Vertebrata</taxon>
        <taxon>Euteleostomi</taxon>
        <taxon>Mammalia</taxon>
        <taxon>Eutheria</taxon>
        <taxon>Euarchontoglires</taxon>
        <taxon>Primates</taxon>
        <taxon>Haplorrhini</taxon>
        <taxon>Catarrhini</taxon>
        <taxon>Hominidae</taxon>
        <taxon>Homo</taxon>
    </lineage>
</organism>
<keyword id="KW-0472">Membrane</keyword>
<keyword id="KW-1267">Proteomics identification</keyword>
<keyword id="KW-1185">Reference proteome</keyword>
<keyword id="KW-0812">Transmembrane</keyword>
<keyword id="KW-1133">Transmembrane helix</keyword>
<accession>P0CK96</accession>
<accession>B3KWR0</accession>
<accession>O75035</accession>
<accession>Q2TAY8</accession>
<accession>Q569F8</accession>
<accession>Q5CZA4</accession>
<accession>Q9Y3J8</accession>
<sequence>MSSSVKTPALEELVPGSEEKPKGRSPLSWGSLFGHRSEKIVFAKSDGGTDENVLTVTITETTVIESDLGVWSSRALLYLTLWFFFSFCTLFLNKYILSLLGGEPSMLGAVQMLSTTVIGCVKTLVPCCLYQHKARLSYPPNFLMTMLFVGLMRFATVVLGLVSLKNVAVSFAETVKSSAPIFTVIMSRMILGEYTGLLVNLSLIPVMGGLALCTATEISFNVLGFSAALSTNIMDCLQNVFSKKLLSGDKYRFSAPELQFYTSAAAVAMLVPARVFFTDVPVIGRSGKSFSYNQDVVLLLLTDGVLFHLQSVTAYALMGKISPVTFSVASTVKHALSIWLSVIVFGNKITSLSAVGTALVTVGVLLYNKARQHQQEALQSLAAATGRAPDDTVEPLLPQDPRQHP</sequence>
<evidence type="ECO:0000250" key="1"/>
<evidence type="ECO:0000255" key="2"/>
<evidence type="ECO:0000256" key="3">
    <source>
        <dbReference type="SAM" id="MobiDB-lite"/>
    </source>
</evidence>
<evidence type="ECO:0000305" key="4"/>
<dbReference type="EMBL" id="AB007916">
    <property type="protein sequence ID" value="BAA32292.3"/>
    <property type="status" value="ALT_INIT"/>
    <property type="molecule type" value="mRNA"/>
</dbReference>
<dbReference type="EMBL" id="AK125619">
    <property type="protein sequence ID" value="BAG54222.1"/>
    <property type="molecule type" value="mRNA"/>
</dbReference>
<dbReference type="EMBL" id="CR936618">
    <property type="protein sequence ID" value="CAI56761.1"/>
    <property type="molecule type" value="mRNA"/>
</dbReference>
<dbReference type="EMBL" id="AL031282">
    <property type="status" value="NOT_ANNOTATED_CDS"/>
    <property type="molecule type" value="Genomic_DNA"/>
</dbReference>
<dbReference type="EMBL" id="AL691432">
    <property type="status" value="NOT_ANNOTATED_CDS"/>
    <property type="molecule type" value="Genomic_DNA"/>
</dbReference>
<dbReference type="EMBL" id="CH471183">
    <property type="protein sequence ID" value="EAW56159.1"/>
    <property type="molecule type" value="Genomic_DNA"/>
</dbReference>
<dbReference type="EMBL" id="BC110653">
    <property type="protein sequence ID" value="AAI10654.1"/>
    <property type="molecule type" value="mRNA"/>
</dbReference>
<dbReference type="CCDS" id="CCDS44041.1"/>
<dbReference type="RefSeq" id="NP_001104251.1">
    <property type="nucleotide sequence ID" value="NM_001110781.3"/>
</dbReference>
<dbReference type="RefSeq" id="NP_001277193.1">
    <property type="nucleotide sequence ID" value="NM_001290264.2"/>
</dbReference>
<dbReference type="SMR" id="P0CK96"/>
<dbReference type="BioGRID" id="609083">
    <property type="interactions" value="3"/>
</dbReference>
<dbReference type="FunCoup" id="P0CK96">
    <property type="interactions" value="314"/>
</dbReference>
<dbReference type="IntAct" id="P0CK96">
    <property type="interactions" value="3"/>
</dbReference>
<dbReference type="STRING" id="9606.ENSP00000481694"/>
<dbReference type="TCDB" id="2.A.7.9.7">
    <property type="family name" value="the drug/metabolite transporter (dmt) superfamily"/>
</dbReference>
<dbReference type="iPTMnet" id="P0CK96"/>
<dbReference type="PhosphoSitePlus" id="P0CK96"/>
<dbReference type="SwissPalm" id="P0CK96"/>
<dbReference type="BioMuta" id="SLC35E2B"/>
<dbReference type="DMDM" id="325530284"/>
<dbReference type="jPOST" id="P0CK96"/>
<dbReference type="MassIVE" id="P0CK96"/>
<dbReference type="PaxDb" id="9606-ENSP00000481694"/>
<dbReference type="PeptideAtlas" id="P0CK96"/>
<dbReference type="ProteomicsDB" id="52501"/>
<dbReference type="Pumba" id="P0CK96"/>
<dbReference type="Antibodypedia" id="62304">
    <property type="antibodies" value="46 antibodies from 13 providers"/>
</dbReference>
<dbReference type="DNASU" id="728661"/>
<dbReference type="Ensembl" id="ENST00000611123.1">
    <property type="protein sequence ID" value="ENSP00000484635.1"/>
    <property type="gene ID" value="ENSG00000189339.12"/>
</dbReference>
<dbReference type="Ensembl" id="ENST00000617444.5">
    <property type="protein sequence ID" value="ENSP00000481694.1"/>
    <property type="gene ID" value="ENSG00000189339.12"/>
</dbReference>
<dbReference type="GeneID" id="728661"/>
<dbReference type="KEGG" id="hsa:728661"/>
<dbReference type="MANE-Select" id="ENST00000617444.5">
    <property type="protein sequence ID" value="ENSP00000481694.1"/>
    <property type="RefSeq nucleotide sequence ID" value="NM_001290264.2"/>
    <property type="RefSeq protein sequence ID" value="NP_001277193.1"/>
</dbReference>
<dbReference type="UCSC" id="uc031tmq.2">
    <property type="organism name" value="human"/>
</dbReference>
<dbReference type="AGR" id="HGNC:33941"/>
<dbReference type="CTD" id="728661"/>
<dbReference type="DisGeNET" id="728661"/>
<dbReference type="GeneCards" id="SLC35E2B"/>
<dbReference type="HGNC" id="HGNC:33941">
    <property type="gene designation" value="SLC35E2B"/>
</dbReference>
<dbReference type="HPA" id="ENSG00000189339">
    <property type="expression patterns" value="Low tissue specificity"/>
</dbReference>
<dbReference type="MIM" id="619315">
    <property type="type" value="gene"/>
</dbReference>
<dbReference type="neXtProt" id="NX_P0CK96"/>
<dbReference type="OpenTargets" id="ENSG00000189339"/>
<dbReference type="VEuPathDB" id="HostDB:ENSG00000189339"/>
<dbReference type="eggNOG" id="KOG1441">
    <property type="taxonomic scope" value="Eukaryota"/>
</dbReference>
<dbReference type="GeneTree" id="ENSGT00940000159351"/>
<dbReference type="HOGENOM" id="CLU_019048_2_0_1"/>
<dbReference type="InParanoid" id="P0CK96"/>
<dbReference type="OMA" id="YFPCGMY"/>
<dbReference type="OrthoDB" id="5547497at2759"/>
<dbReference type="PAN-GO" id="P0CK96">
    <property type="GO annotations" value="2 GO annotations based on evolutionary models"/>
</dbReference>
<dbReference type="PhylomeDB" id="P0CK96"/>
<dbReference type="TreeFam" id="TF331257"/>
<dbReference type="PathwayCommons" id="P0CK96"/>
<dbReference type="SignaLink" id="P0CK96"/>
<dbReference type="BioGRID-ORCS" id="728661">
    <property type="hits" value="16 hits in 1154 CRISPR screens"/>
</dbReference>
<dbReference type="ChiTaRS" id="SLC35E2B">
    <property type="organism name" value="human"/>
</dbReference>
<dbReference type="GenomeRNAi" id="728661"/>
<dbReference type="Pharos" id="P0CK96">
    <property type="development level" value="Tdark"/>
</dbReference>
<dbReference type="PRO" id="PR:P0CK96"/>
<dbReference type="Proteomes" id="UP000005640">
    <property type="component" value="Chromosome 1"/>
</dbReference>
<dbReference type="RNAct" id="P0CK96">
    <property type="molecule type" value="protein"/>
</dbReference>
<dbReference type="Bgee" id="ENSG00000189339">
    <property type="expression patterns" value="Expressed in tibia and 209 other cell types or tissues"/>
</dbReference>
<dbReference type="ExpressionAtlas" id="P0CK96">
    <property type="expression patterns" value="baseline and differential"/>
</dbReference>
<dbReference type="GO" id="GO:0005794">
    <property type="term" value="C:Golgi apparatus"/>
    <property type="evidence" value="ECO:0000318"/>
    <property type="project" value="GO_Central"/>
</dbReference>
<dbReference type="GO" id="GO:0016020">
    <property type="term" value="C:membrane"/>
    <property type="evidence" value="ECO:0007669"/>
    <property type="project" value="UniProtKB-SubCell"/>
</dbReference>
<dbReference type="GO" id="GO:0015297">
    <property type="term" value="F:antiporter activity"/>
    <property type="evidence" value="ECO:0000318"/>
    <property type="project" value="GO_Central"/>
</dbReference>
<dbReference type="GO" id="GO:0001835">
    <property type="term" value="P:blastocyst hatching"/>
    <property type="evidence" value="ECO:0007669"/>
    <property type="project" value="Ensembl"/>
</dbReference>
<dbReference type="GO" id="GO:0055085">
    <property type="term" value="P:transmembrane transport"/>
    <property type="evidence" value="ECO:0000318"/>
    <property type="project" value="GO_Central"/>
</dbReference>
<dbReference type="InterPro" id="IPR004853">
    <property type="entry name" value="Sugar_P_trans_dom"/>
</dbReference>
<dbReference type="InterPro" id="IPR050186">
    <property type="entry name" value="TPT_transporter"/>
</dbReference>
<dbReference type="PANTHER" id="PTHR11132">
    <property type="entry name" value="SOLUTE CARRIER FAMILY 35"/>
    <property type="match status" value="1"/>
</dbReference>
<dbReference type="Pfam" id="PF03151">
    <property type="entry name" value="TPT"/>
    <property type="match status" value="1"/>
</dbReference>
<dbReference type="SUPFAM" id="SSF103481">
    <property type="entry name" value="Multidrug resistance efflux transporter EmrE"/>
    <property type="match status" value="1"/>
</dbReference>